<comment type="function">
    <text evidence="1">Forms part of the ribosomal stalk, playing a central role in the interaction of the ribosome with GTP-bound translation factors.</text>
</comment>
<comment type="subunit">
    <text evidence="1">Part of the ribosomal stalk of the 50S ribosomal subunit. The N-terminus interacts with L11 and the large rRNA to form the base of the stalk. The C-terminus forms an elongated spine to which L12 dimers bind in a sequential fashion forming a multimeric L10(L12)X complex.</text>
</comment>
<comment type="similarity">
    <text evidence="1">Belongs to the universal ribosomal protein uL10 family.</text>
</comment>
<organism>
    <name type="scientific">Pelodictyon phaeoclathratiforme (strain DSM 5477 / BU-1)</name>
    <dbReference type="NCBI Taxonomy" id="324925"/>
    <lineage>
        <taxon>Bacteria</taxon>
        <taxon>Pseudomonadati</taxon>
        <taxon>Chlorobiota</taxon>
        <taxon>Chlorobiia</taxon>
        <taxon>Chlorobiales</taxon>
        <taxon>Chlorobiaceae</taxon>
        <taxon>Chlorobium/Pelodictyon group</taxon>
        <taxon>Pelodictyon</taxon>
    </lineage>
</organism>
<protein>
    <recommendedName>
        <fullName evidence="1">Large ribosomal subunit protein uL10</fullName>
    </recommendedName>
    <alternativeName>
        <fullName evidence="2">50S ribosomal protein L10</fullName>
    </alternativeName>
</protein>
<feature type="chain" id="PRO_1000120993" description="Large ribosomal subunit protein uL10">
    <location>
        <begin position="1"/>
        <end position="172"/>
    </location>
</feature>
<accession>B4SG13</accession>
<keyword id="KW-1185">Reference proteome</keyword>
<keyword id="KW-0687">Ribonucleoprotein</keyword>
<keyword id="KW-0689">Ribosomal protein</keyword>
<keyword id="KW-0694">RNA-binding</keyword>
<keyword id="KW-0699">rRNA-binding</keyword>
<name>RL10_PELPB</name>
<reference key="1">
    <citation type="submission" date="2008-06" db="EMBL/GenBank/DDBJ databases">
        <title>Complete sequence of Pelodictyon phaeoclathratiforme BU-1.</title>
        <authorList>
            <consortium name="US DOE Joint Genome Institute"/>
            <person name="Lucas S."/>
            <person name="Copeland A."/>
            <person name="Lapidus A."/>
            <person name="Glavina del Rio T."/>
            <person name="Dalin E."/>
            <person name="Tice H."/>
            <person name="Bruce D."/>
            <person name="Goodwin L."/>
            <person name="Pitluck S."/>
            <person name="Schmutz J."/>
            <person name="Larimer F."/>
            <person name="Land M."/>
            <person name="Hauser L."/>
            <person name="Kyrpides N."/>
            <person name="Mikhailova N."/>
            <person name="Liu Z."/>
            <person name="Li T."/>
            <person name="Zhao F."/>
            <person name="Overmann J."/>
            <person name="Bryant D.A."/>
            <person name="Richardson P."/>
        </authorList>
    </citation>
    <scope>NUCLEOTIDE SEQUENCE [LARGE SCALE GENOMIC DNA]</scope>
    <source>
        <strain>DSM 5477 / BU-1</strain>
    </source>
</reference>
<dbReference type="EMBL" id="CP001110">
    <property type="protein sequence ID" value="ACF44840.1"/>
    <property type="molecule type" value="Genomic_DNA"/>
</dbReference>
<dbReference type="RefSeq" id="WP_012509312.1">
    <property type="nucleotide sequence ID" value="NC_011060.1"/>
</dbReference>
<dbReference type="SMR" id="B4SG13"/>
<dbReference type="STRING" id="324925.Ppha_2681"/>
<dbReference type="KEGG" id="pph:Ppha_2681"/>
<dbReference type="eggNOG" id="COG0244">
    <property type="taxonomic scope" value="Bacteria"/>
</dbReference>
<dbReference type="HOGENOM" id="CLU_092227_3_0_10"/>
<dbReference type="OrthoDB" id="1523686at2"/>
<dbReference type="Proteomes" id="UP000002724">
    <property type="component" value="Chromosome"/>
</dbReference>
<dbReference type="GO" id="GO:0015934">
    <property type="term" value="C:large ribosomal subunit"/>
    <property type="evidence" value="ECO:0007669"/>
    <property type="project" value="InterPro"/>
</dbReference>
<dbReference type="GO" id="GO:0070180">
    <property type="term" value="F:large ribosomal subunit rRNA binding"/>
    <property type="evidence" value="ECO:0007669"/>
    <property type="project" value="UniProtKB-UniRule"/>
</dbReference>
<dbReference type="GO" id="GO:0003735">
    <property type="term" value="F:structural constituent of ribosome"/>
    <property type="evidence" value="ECO:0007669"/>
    <property type="project" value="InterPro"/>
</dbReference>
<dbReference type="GO" id="GO:0006412">
    <property type="term" value="P:translation"/>
    <property type="evidence" value="ECO:0007669"/>
    <property type="project" value="UniProtKB-UniRule"/>
</dbReference>
<dbReference type="CDD" id="cd05797">
    <property type="entry name" value="Ribosomal_L10"/>
    <property type="match status" value="1"/>
</dbReference>
<dbReference type="Gene3D" id="3.30.70.1730">
    <property type="match status" value="1"/>
</dbReference>
<dbReference type="Gene3D" id="6.10.250.290">
    <property type="match status" value="1"/>
</dbReference>
<dbReference type="HAMAP" id="MF_00362">
    <property type="entry name" value="Ribosomal_uL10"/>
    <property type="match status" value="1"/>
</dbReference>
<dbReference type="InterPro" id="IPR001790">
    <property type="entry name" value="Ribosomal_uL10"/>
</dbReference>
<dbReference type="InterPro" id="IPR043141">
    <property type="entry name" value="Ribosomal_uL10-like_sf"/>
</dbReference>
<dbReference type="InterPro" id="IPR022973">
    <property type="entry name" value="Ribosomal_uL10_bac"/>
</dbReference>
<dbReference type="InterPro" id="IPR047865">
    <property type="entry name" value="Ribosomal_uL10_bac_type"/>
</dbReference>
<dbReference type="InterPro" id="IPR002363">
    <property type="entry name" value="Ribosomal_uL10_CS_bac"/>
</dbReference>
<dbReference type="NCBIfam" id="NF000955">
    <property type="entry name" value="PRK00099.1-1"/>
    <property type="match status" value="1"/>
</dbReference>
<dbReference type="PANTHER" id="PTHR11560">
    <property type="entry name" value="39S RIBOSOMAL PROTEIN L10, MITOCHONDRIAL"/>
    <property type="match status" value="1"/>
</dbReference>
<dbReference type="Pfam" id="PF00466">
    <property type="entry name" value="Ribosomal_L10"/>
    <property type="match status" value="1"/>
</dbReference>
<dbReference type="SUPFAM" id="SSF160369">
    <property type="entry name" value="Ribosomal protein L10-like"/>
    <property type="match status" value="1"/>
</dbReference>
<dbReference type="PROSITE" id="PS01109">
    <property type="entry name" value="RIBOSOMAL_L10"/>
    <property type="match status" value="1"/>
</dbReference>
<evidence type="ECO:0000255" key="1">
    <source>
        <dbReference type="HAMAP-Rule" id="MF_00362"/>
    </source>
</evidence>
<evidence type="ECO:0000305" key="2"/>
<sequence>MKRDRKEEIVQEVAEKINRSQGIYLTEFQGLSVAKMSELRREFRKVGVEYRVVKNTLIKQALKDLAGADKLAPGLKSTTAVAFGFDDPVAPAKVIRKFSKTNDALKFKMASIDGVVFGPDQLPLLSEMLTKTENIGRAAGLINGVVSSVPMVVNAVMRNLVCALDQIAKQKQ</sequence>
<gene>
    <name evidence="1" type="primary">rplJ</name>
    <name type="ordered locus">Ppha_2681</name>
</gene>
<proteinExistence type="inferred from homology"/>